<name>BLAB_STRCI</name>
<accession>P33652</accession>
<organism>
    <name type="scientific">Streptomyces cacaoi</name>
    <dbReference type="NCBI Taxonomy" id="1898"/>
    <lineage>
        <taxon>Bacteria</taxon>
        <taxon>Bacillati</taxon>
        <taxon>Actinomycetota</taxon>
        <taxon>Actinomycetes</taxon>
        <taxon>Kitasatosporales</taxon>
        <taxon>Streptomycetaceae</taxon>
        <taxon>Streptomyces</taxon>
    </lineage>
</organism>
<keyword id="KW-0002">3D-structure</keyword>
<keyword id="KW-0804">Transcription</keyword>
<keyword id="KW-0805">Transcription regulation</keyword>
<proteinExistence type="evidence at protein level"/>
<sequence length="312" mass="33838">MLNSESLLRELRDALHEGGLTGSFLVRDLYTGEELGIDPDTELPTASLVKLPLALATLERIRLGEVDGAQQIEVAPGRITTPGPTGLSRFRHPARVAVDDLLYLSTSVSDGTASDALFEITPPAQVEQMVREWGFRDLTVRHSMRELSETPAERFESADAHLAHALAISAGTSGRGHRVPQLDVARANTGTARAFVDLLEALWAPVLTGPRPGRTSRALPPEPAARLRELMAANLLRHRLAPDFASDAATWSSKTGTLLNLRHEVGVVEHADGQVFAVAVLTESQVPADSQPGAEALMAQVARRLRDRLREW</sequence>
<reference key="1">
    <citation type="journal article" date="1992" name="J. Bacteriol.">
        <title>Nucleotide sequence and transcriptional analysis of activator-regulator proteins for beta-lactamase in Streptomyces cacaoi.</title>
        <authorList>
            <person name="Urabe H."/>
            <person name="Ogawara H."/>
        </authorList>
    </citation>
    <scope>NUCLEOTIDE SEQUENCE [GENOMIC DNA]</scope>
    <source>
        <strain>ATCC 3082 / DSM 40057 / JCM 4352 / BCRC 12103 / KCC S-0352 / LMG 19320 / NBRC 12748 / NCIMB 9626 / IMRU 3082</strain>
    </source>
</reference>
<reference key="2">
    <citation type="journal article" date="1992" name="Mol. Gen. Genet.">
        <title>Induction of a Streptomyces cacaoi beta-lactamase gene cloned in S. lividans.</title>
        <authorList>
            <person name="Lenzini V.M."/>
            <person name="Magdalena J."/>
            <person name="Fraipont C."/>
            <person name="Joris B."/>
            <person name="Matagne A."/>
            <person name="Dusart J."/>
        </authorList>
    </citation>
    <scope>NUCLEOTIDE SEQUENCE [GENOMIC DNA]</scope>
</reference>
<evidence type="ECO:0000305" key="1"/>
<evidence type="ECO:0007829" key="2">
    <source>
        <dbReference type="PDB" id="2WUQ"/>
    </source>
</evidence>
<feature type="chain" id="PRO_0000195468" description="Beta-lactamase regulatory protein BlaB">
    <location>
        <begin position="1"/>
        <end position="312"/>
    </location>
</feature>
<feature type="sequence conflict" description="In Ref. 2; CAA45315." evidence="1" ref="2">
    <original>E</original>
    <variation>K</variation>
    <location>
        <position position="222"/>
    </location>
</feature>
<feature type="helix" evidence="2">
    <location>
        <begin position="5"/>
        <end position="17"/>
    </location>
</feature>
<feature type="strand" evidence="2">
    <location>
        <begin position="20"/>
        <end position="28"/>
    </location>
</feature>
<feature type="turn" evidence="2">
    <location>
        <begin position="29"/>
        <end position="31"/>
    </location>
</feature>
<feature type="strand" evidence="2">
    <location>
        <begin position="34"/>
        <end position="38"/>
    </location>
</feature>
<feature type="helix" evidence="2">
    <location>
        <begin position="46"/>
        <end position="49"/>
    </location>
</feature>
<feature type="helix" evidence="2">
    <location>
        <begin position="50"/>
        <end position="62"/>
    </location>
</feature>
<feature type="strand" evidence="2">
    <location>
        <begin position="71"/>
        <end position="74"/>
    </location>
</feature>
<feature type="strand" evidence="2">
    <location>
        <begin position="81"/>
        <end position="83"/>
    </location>
</feature>
<feature type="helix" evidence="2">
    <location>
        <begin position="86"/>
        <end position="89"/>
    </location>
</feature>
<feature type="strand" evidence="2">
    <location>
        <begin position="94"/>
        <end position="97"/>
    </location>
</feature>
<feature type="helix" evidence="2">
    <location>
        <begin position="98"/>
        <end position="107"/>
    </location>
</feature>
<feature type="helix" evidence="2">
    <location>
        <begin position="111"/>
        <end position="120"/>
    </location>
</feature>
<feature type="helix" evidence="2">
    <location>
        <begin position="123"/>
        <end position="132"/>
    </location>
</feature>
<feature type="helix" evidence="2">
    <location>
        <begin position="180"/>
        <end position="182"/>
    </location>
</feature>
<feature type="turn" evidence="2">
    <location>
        <begin position="184"/>
        <end position="186"/>
    </location>
</feature>
<feature type="helix" evidence="2">
    <location>
        <begin position="192"/>
        <end position="203"/>
    </location>
</feature>
<feature type="helix" evidence="2">
    <location>
        <begin position="204"/>
        <end position="206"/>
    </location>
</feature>
<feature type="helix" evidence="2">
    <location>
        <begin position="221"/>
        <end position="232"/>
    </location>
</feature>
<feature type="strand" evidence="2">
    <location>
        <begin position="238"/>
        <end position="240"/>
    </location>
</feature>
<feature type="helix" evidence="2">
    <location>
        <begin position="241"/>
        <end position="244"/>
    </location>
</feature>
<feature type="strand" evidence="2">
    <location>
        <begin position="249"/>
        <end position="258"/>
    </location>
</feature>
<feature type="strand" evidence="2">
    <location>
        <begin position="261"/>
        <end position="270"/>
    </location>
</feature>
<feature type="strand" evidence="2">
    <location>
        <begin position="275"/>
        <end position="286"/>
    </location>
</feature>
<feature type="helix" evidence="2">
    <location>
        <begin position="292"/>
        <end position="312"/>
    </location>
</feature>
<protein>
    <recommendedName>
        <fullName>Beta-lactamase regulatory protein BlaB</fullName>
    </recommendedName>
</protein>
<dbReference type="EMBL" id="D00937">
    <property type="protein sequence ID" value="BAA00774.1"/>
    <property type="molecule type" value="Genomic_DNA"/>
</dbReference>
<dbReference type="EMBL" id="X63780">
    <property type="protein sequence ID" value="CAA45315.1"/>
    <property type="molecule type" value="Genomic_DNA"/>
</dbReference>
<dbReference type="PIR" id="B41855">
    <property type="entry name" value="B41855"/>
</dbReference>
<dbReference type="PDB" id="2WUQ">
    <property type="method" value="X-ray"/>
    <property type="resolution" value="1.80 A"/>
    <property type="chains" value="A/B=2-312"/>
</dbReference>
<dbReference type="PDBsum" id="2WUQ"/>
<dbReference type="SMR" id="P33652"/>
<dbReference type="EvolutionaryTrace" id="P33652"/>
<dbReference type="GO" id="GO:0008800">
    <property type="term" value="F:beta-lactamase activity"/>
    <property type="evidence" value="ECO:0007669"/>
    <property type="project" value="InterPro"/>
</dbReference>
<dbReference type="GO" id="GO:0030655">
    <property type="term" value="P:beta-lactam antibiotic catabolic process"/>
    <property type="evidence" value="ECO:0007669"/>
    <property type="project" value="InterPro"/>
</dbReference>
<dbReference type="GO" id="GO:0046677">
    <property type="term" value="P:response to antibiotic"/>
    <property type="evidence" value="ECO:0007669"/>
    <property type="project" value="InterPro"/>
</dbReference>
<dbReference type="Gene3D" id="3.40.710.10">
    <property type="entry name" value="DD-peptidase/beta-lactamase superfamily"/>
    <property type="match status" value="1"/>
</dbReference>
<dbReference type="InterPro" id="IPR012338">
    <property type="entry name" value="Beta-lactam/transpept-like"/>
</dbReference>
<dbReference type="InterPro" id="IPR045155">
    <property type="entry name" value="Beta-lactam_cat"/>
</dbReference>
<dbReference type="InterPro" id="IPR000871">
    <property type="entry name" value="Beta-lactam_class-A"/>
</dbReference>
<dbReference type="PANTHER" id="PTHR35333">
    <property type="entry name" value="BETA-LACTAMASE"/>
    <property type="match status" value="1"/>
</dbReference>
<dbReference type="PANTHER" id="PTHR35333:SF3">
    <property type="entry name" value="BETA-LACTAMASE-TYPE TRANSPEPTIDASE FOLD CONTAINING PROTEIN"/>
    <property type="match status" value="1"/>
</dbReference>
<dbReference type="Pfam" id="PF13354">
    <property type="entry name" value="Beta-lactamase2"/>
    <property type="match status" value="1"/>
</dbReference>
<dbReference type="SUPFAM" id="SSF56601">
    <property type="entry name" value="beta-lactamase/transpeptidase-like"/>
    <property type="match status" value="1"/>
</dbReference>
<gene>
    <name type="primary">blaB</name>
</gene>